<comment type="function">
    <text evidence="1">Catalyzes the attachment of glutamate to tRNA(Glu) in a two-step reaction: glutamate is first activated by ATP to form Glu-AMP and then transferred to the acceptor end of tRNA(Glu).</text>
</comment>
<comment type="catalytic activity">
    <reaction evidence="1">
        <text>tRNA(Glu) + L-glutamate + ATP = L-glutamyl-tRNA(Glu) + AMP + diphosphate</text>
        <dbReference type="Rhea" id="RHEA:23540"/>
        <dbReference type="Rhea" id="RHEA-COMP:9663"/>
        <dbReference type="Rhea" id="RHEA-COMP:9680"/>
        <dbReference type="ChEBI" id="CHEBI:29985"/>
        <dbReference type="ChEBI" id="CHEBI:30616"/>
        <dbReference type="ChEBI" id="CHEBI:33019"/>
        <dbReference type="ChEBI" id="CHEBI:78442"/>
        <dbReference type="ChEBI" id="CHEBI:78520"/>
        <dbReference type="ChEBI" id="CHEBI:456215"/>
        <dbReference type="EC" id="6.1.1.17"/>
    </reaction>
</comment>
<comment type="cofactor">
    <cofactor evidence="1">
        <name>Zn(2+)</name>
        <dbReference type="ChEBI" id="CHEBI:29105"/>
    </cofactor>
    <text evidence="1">Binds 1 zinc ion per subunit.</text>
</comment>
<comment type="subunit">
    <text evidence="1">Monomer.</text>
</comment>
<comment type="subcellular location">
    <subcellularLocation>
        <location evidence="1">Cytoplasm</location>
    </subcellularLocation>
</comment>
<comment type="similarity">
    <text evidence="1">Belongs to the class-I aminoacyl-tRNA synthetase family. Glutamate--tRNA ligase type 1 subfamily.</text>
</comment>
<protein>
    <recommendedName>
        <fullName evidence="1">Glutamate--tRNA ligase</fullName>
        <ecNumber evidence="1">6.1.1.17</ecNumber>
    </recommendedName>
    <alternativeName>
        <fullName evidence="1">Glutamyl-tRNA synthetase</fullName>
        <shortName evidence="1">GluRS</shortName>
    </alternativeName>
</protein>
<sequence>MEVRVRYAPSPTGLQHIGGIRTALFNFLFARAHAGVFVLRVEDTDRSRCTAAFEQNLYDTLRWLGVSWDEGGGCPETAVKQGARGDGRSVAHAGGAYGPYTQSARTDLYRAQVARLVETGQAYYCFCDASRLERVRKIRTLNRMPPGYDRHCRELLPEEVRECLASGVPHVIRFKVPLEGSTHFRDALLGDIEWQNEEINPDPILLKSDGFPTYHLANVVDDHAMRITHVLRAQEWVPSTPLHLLLYRAFGWQPPLFCHLPMVMGADGHKLSKRHGATSCDEFRNAGYLPEALLNYVAMLGCSYGEGQDLFTREQLCAHFSLSRLNKSPAVFDYKKLAWFNGQYIRAKSDEQLCALVWPFIANAGVCGHIPADVEAGAVRTRRFADEAPCAPTEAQRSMLMRVIPLIKERLRFLTDAPELVRCFFQEPSLPEQGVFVPKRLDVAQVRAVLVRARGLVHEIVSASEPDVEVLLRAEAEKFGIKLGDFLMPIRVALTGATVSAPLVGTIRILGASRSCARIEHVIRERFSDDSQGVGGG</sequence>
<gene>
    <name evidence="1" type="primary">gltX</name>
    <name type="ordered locus">TP_0673</name>
</gene>
<reference key="1">
    <citation type="journal article" date="1998" name="Science">
        <title>Complete genome sequence of Treponema pallidum, the syphilis spirochete.</title>
        <authorList>
            <person name="Fraser C.M."/>
            <person name="Norris S.J."/>
            <person name="Weinstock G.M."/>
            <person name="White O."/>
            <person name="Sutton G.G."/>
            <person name="Dodson R.J."/>
            <person name="Gwinn M.L."/>
            <person name="Hickey E.K."/>
            <person name="Clayton R.A."/>
            <person name="Ketchum K.A."/>
            <person name="Sodergren E."/>
            <person name="Hardham J.M."/>
            <person name="McLeod M.P."/>
            <person name="Salzberg S.L."/>
            <person name="Peterson J.D."/>
            <person name="Khalak H.G."/>
            <person name="Richardson D.L."/>
            <person name="Howell J.K."/>
            <person name="Chidambaram M."/>
            <person name="Utterback T.R."/>
            <person name="McDonald L.A."/>
            <person name="Artiach P."/>
            <person name="Bowman C."/>
            <person name="Cotton M.D."/>
            <person name="Fujii C."/>
            <person name="Garland S.A."/>
            <person name="Hatch B."/>
            <person name="Horst K."/>
            <person name="Roberts K.M."/>
            <person name="Sandusky M."/>
            <person name="Weidman J.F."/>
            <person name="Smith H.O."/>
            <person name="Venter J.C."/>
        </authorList>
    </citation>
    <scope>NUCLEOTIDE SEQUENCE [LARGE SCALE GENOMIC DNA]</scope>
    <source>
        <strain>Nichols</strain>
    </source>
</reference>
<feature type="chain" id="PRO_0000119687" description="Glutamate--tRNA ligase">
    <location>
        <begin position="1"/>
        <end position="537"/>
    </location>
</feature>
<feature type="short sequence motif" description="'HIGH' region" evidence="1">
    <location>
        <begin position="9"/>
        <end position="19"/>
    </location>
</feature>
<feature type="short sequence motif" description="'KMSKS' region" evidence="1">
    <location>
        <begin position="270"/>
        <end position="274"/>
    </location>
</feature>
<feature type="binding site" evidence="1">
    <location>
        <position position="125"/>
    </location>
    <ligand>
        <name>Zn(2+)</name>
        <dbReference type="ChEBI" id="CHEBI:29105"/>
    </ligand>
</feature>
<feature type="binding site" evidence="1">
    <location>
        <position position="127"/>
    </location>
    <ligand>
        <name>Zn(2+)</name>
        <dbReference type="ChEBI" id="CHEBI:29105"/>
    </ligand>
</feature>
<feature type="binding site" evidence="1">
    <location>
        <position position="152"/>
    </location>
    <ligand>
        <name>Zn(2+)</name>
        <dbReference type="ChEBI" id="CHEBI:29105"/>
    </ligand>
</feature>
<feature type="binding site" evidence="1">
    <location>
        <position position="154"/>
    </location>
    <ligand>
        <name>Zn(2+)</name>
        <dbReference type="ChEBI" id="CHEBI:29105"/>
    </ligand>
</feature>
<feature type="binding site" evidence="1">
    <location>
        <position position="273"/>
    </location>
    <ligand>
        <name>ATP</name>
        <dbReference type="ChEBI" id="CHEBI:30616"/>
    </ligand>
</feature>
<organism>
    <name type="scientific">Treponema pallidum (strain Nichols)</name>
    <dbReference type="NCBI Taxonomy" id="243276"/>
    <lineage>
        <taxon>Bacteria</taxon>
        <taxon>Pseudomonadati</taxon>
        <taxon>Spirochaetota</taxon>
        <taxon>Spirochaetia</taxon>
        <taxon>Spirochaetales</taxon>
        <taxon>Treponemataceae</taxon>
        <taxon>Treponema</taxon>
    </lineage>
</organism>
<proteinExistence type="inferred from homology"/>
<name>SYE_TREPA</name>
<accession>O83679</accession>
<evidence type="ECO:0000255" key="1">
    <source>
        <dbReference type="HAMAP-Rule" id="MF_00022"/>
    </source>
</evidence>
<keyword id="KW-0030">Aminoacyl-tRNA synthetase</keyword>
<keyword id="KW-0067">ATP-binding</keyword>
<keyword id="KW-0963">Cytoplasm</keyword>
<keyword id="KW-0436">Ligase</keyword>
<keyword id="KW-0479">Metal-binding</keyword>
<keyword id="KW-0547">Nucleotide-binding</keyword>
<keyword id="KW-0648">Protein biosynthesis</keyword>
<keyword id="KW-1185">Reference proteome</keyword>
<keyword id="KW-0862">Zinc</keyword>
<dbReference type="EC" id="6.1.1.17" evidence="1"/>
<dbReference type="EMBL" id="AE000520">
    <property type="protein sequence ID" value="AAC26571.1"/>
    <property type="molecule type" value="Genomic_DNA"/>
</dbReference>
<dbReference type="PIR" id="D71296">
    <property type="entry name" value="D71296"/>
</dbReference>
<dbReference type="RefSeq" id="WP_010882118.1">
    <property type="nucleotide sequence ID" value="NC_021490.2"/>
</dbReference>
<dbReference type="SMR" id="O83679"/>
<dbReference type="IntAct" id="O83679">
    <property type="interactions" value="2"/>
</dbReference>
<dbReference type="STRING" id="243276.TP_0673"/>
<dbReference type="EnsemblBacteria" id="AAC26571">
    <property type="protein sequence ID" value="AAC26571"/>
    <property type="gene ID" value="TP_0673"/>
</dbReference>
<dbReference type="GeneID" id="93876441"/>
<dbReference type="KEGG" id="tpa:TP_0673"/>
<dbReference type="KEGG" id="tpw:TPANIC_0673"/>
<dbReference type="eggNOG" id="COG0008">
    <property type="taxonomic scope" value="Bacteria"/>
</dbReference>
<dbReference type="HOGENOM" id="CLU_015768_6_3_12"/>
<dbReference type="OrthoDB" id="9807503at2"/>
<dbReference type="Proteomes" id="UP000000811">
    <property type="component" value="Chromosome"/>
</dbReference>
<dbReference type="GO" id="GO:0005829">
    <property type="term" value="C:cytosol"/>
    <property type="evidence" value="ECO:0007669"/>
    <property type="project" value="TreeGrafter"/>
</dbReference>
<dbReference type="GO" id="GO:0005524">
    <property type="term" value="F:ATP binding"/>
    <property type="evidence" value="ECO:0007669"/>
    <property type="project" value="UniProtKB-UniRule"/>
</dbReference>
<dbReference type="GO" id="GO:0004818">
    <property type="term" value="F:glutamate-tRNA ligase activity"/>
    <property type="evidence" value="ECO:0007669"/>
    <property type="project" value="UniProtKB-UniRule"/>
</dbReference>
<dbReference type="GO" id="GO:0000049">
    <property type="term" value="F:tRNA binding"/>
    <property type="evidence" value="ECO:0007669"/>
    <property type="project" value="InterPro"/>
</dbReference>
<dbReference type="GO" id="GO:0008270">
    <property type="term" value="F:zinc ion binding"/>
    <property type="evidence" value="ECO:0007669"/>
    <property type="project" value="UniProtKB-UniRule"/>
</dbReference>
<dbReference type="GO" id="GO:0006424">
    <property type="term" value="P:glutamyl-tRNA aminoacylation"/>
    <property type="evidence" value="ECO:0007669"/>
    <property type="project" value="UniProtKB-UniRule"/>
</dbReference>
<dbReference type="CDD" id="cd00808">
    <property type="entry name" value="GluRS_core"/>
    <property type="match status" value="1"/>
</dbReference>
<dbReference type="FunFam" id="3.40.50.620:FF:000045">
    <property type="entry name" value="Glutamate--tRNA ligase, mitochondrial"/>
    <property type="match status" value="1"/>
</dbReference>
<dbReference type="Gene3D" id="1.10.10.350">
    <property type="match status" value="1"/>
</dbReference>
<dbReference type="Gene3D" id="1.10.8.70">
    <property type="entry name" value="Glutamate-tRNA synthetase, class I, anticodon-binding domain 1"/>
    <property type="match status" value="1"/>
</dbReference>
<dbReference type="Gene3D" id="3.40.50.620">
    <property type="entry name" value="HUPs"/>
    <property type="match status" value="1"/>
</dbReference>
<dbReference type="HAMAP" id="MF_00022">
    <property type="entry name" value="Glu_tRNA_synth_type1"/>
    <property type="match status" value="1"/>
</dbReference>
<dbReference type="InterPro" id="IPR045462">
    <property type="entry name" value="aa-tRNA-synth_I_cd-bd"/>
</dbReference>
<dbReference type="InterPro" id="IPR020751">
    <property type="entry name" value="aa-tRNA-synth_I_codon-bd_sub2"/>
</dbReference>
<dbReference type="InterPro" id="IPR008925">
    <property type="entry name" value="aa_tRNA-synth_I_cd-bd_sf"/>
</dbReference>
<dbReference type="InterPro" id="IPR004527">
    <property type="entry name" value="Glu-tRNA-ligase_bac/mito"/>
</dbReference>
<dbReference type="InterPro" id="IPR020752">
    <property type="entry name" value="Glu-tRNA-synth_I_codon-bd_sub1"/>
</dbReference>
<dbReference type="InterPro" id="IPR000924">
    <property type="entry name" value="Glu/Gln-tRNA-synth"/>
</dbReference>
<dbReference type="InterPro" id="IPR020058">
    <property type="entry name" value="Glu/Gln-tRNA-synth_Ib_cat-dom"/>
</dbReference>
<dbReference type="InterPro" id="IPR049940">
    <property type="entry name" value="GluQ/Sye"/>
</dbReference>
<dbReference type="InterPro" id="IPR033910">
    <property type="entry name" value="GluRS_core"/>
</dbReference>
<dbReference type="InterPro" id="IPR014729">
    <property type="entry name" value="Rossmann-like_a/b/a_fold"/>
</dbReference>
<dbReference type="NCBIfam" id="TIGR00464">
    <property type="entry name" value="gltX_bact"/>
    <property type="match status" value="1"/>
</dbReference>
<dbReference type="PANTHER" id="PTHR43311">
    <property type="entry name" value="GLUTAMATE--TRNA LIGASE"/>
    <property type="match status" value="1"/>
</dbReference>
<dbReference type="PANTHER" id="PTHR43311:SF2">
    <property type="entry name" value="GLUTAMATE--TRNA LIGASE, MITOCHONDRIAL-RELATED"/>
    <property type="match status" value="1"/>
</dbReference>
<dbReference type="Pfam" id="PF19269">
    <property type="entry name" value="Anticodon_2"/>
    <property type="match status" value="1"/>
</dbReference>
<dbReference type="Pfam" id="PF00749">
    <property type="entry name" value="tRNA-synt_1c"/>
    <property type="match status" value="1"/>
</dbReference>
<dbReference type="PRINTS" id="PR00987">
    <property type="entry name" value="TRNASYNTHGLU"/>
</dbReference>
<dbReference type="SUPFAM" id="SSF48163">
    <property type="entry name" value="An anticodon-binding domain of class I aminoacyl-tRNA synthetases"/>
    <property type="match status" value="1"/>
</dbReference>
<dbReference type="SUPFAM" id="SSF52374">
    <property type="entry name" value="Nucleotidylyl transferase"/>
    <property type="match status" value="1"/>
</dbReference>